<gene>
    <name evidence="1" type="primary">hisI</name>
    <name type="ordered locus">DIP1557</name>
</gene>
<sequence length="116" mass="12615">MDDPASYELDPSIAQRVKFNSAGLVPAVVQSTDGEVLMLAWMDAHALAYTIATRKGTYFSRSRNEYWIKGLTSGHTQQVTGLQLDCDGDTVLMTVVQQGGACHTGDRTCFDADVII</sequence>
<name>HIS3_CORDI</name>
<evidence type="ECO:0000255" key="1">
    <source>
        <dbReference type="HAMAP-Rule" id="MF_01021"/>
    </source>
</evidence>
<accession>P60541</accession>
<proteinExistence type="inferred from homology"/>
<organism>
    <name type="scientific">Corynebacterium diphtheriae (strain ATCC 700971 / NCTC 13129 / Biotype gravis)</name>
    <dbReference type="NCBI Taxonomy" id="257309"/>
    <lineage>
        <taxon>Bacteria</taxon>
        <taxon>Bacillati</taxon>
        <taxon>Actinomycetota</taxon>
        <taxon>Actinomycetes</taxon>
        <taxon>Mycobacteriales</taxon>
        <taxon>Corynebacteriaceae</taxon>
        <taxon>Corynebacterium</taxon>
    </lineage>
</organism>
<reference key="1">
    <citation type="journal article" date="2003" name="Nucleic Acids Res.">
        <title>The complete genome sequence and analysis of Corynebacterium diphtheriae NCTC13129.</title>
        <authorList>
            <person name="Cerdeno-Tarraga A.-M."/>
            <person name="Efstratiou A."/>
            <person name="Dover L.G."/>
            <person name="Holden M.T.G."/>
            <person name="Pallen M.J."/>
            <person name="Bentley S.D."/>
            <person name="Besra G.S."/>
            <person name="Churcher C.M."/>
            <person name="James K.D."/>
            <person name="De Zoysa A."/>
            <person name="Chillingworth T."/>
            <person name="Cronin A."/>
            <person name="Dowd L."/>
            <person name="Feltwell T."/>
            <person name="Hamlin N."/>
            <person name="Holroyd S."/>
            <person name="Jagels K."/>
            <person name="Moule S."/>
            <person name="Quail M.A."/>
            <person name="Rabbinowitsch E."/>
            <person name="Rutherford K.M."/>
            <person name="Thomson N.R."/>
            <person name="Unwin L."/>
            <person name="Whitehead S."/>
            <person name="Barrell B.G."/>
            <person name="Parkhill J."/>
        </authorList>
    </citation>
    <scope>NUCLEOTIDE SEQUENCE [LARGE SCALE GENOMIC DNA]</scope>
    <source>
        <strain>ATCC 700971 / NCTC 13129 / Biotype gravis</strain>
    </source>
</reference>
<protein>
    <recommendedName>
        <fullName evidence="1">Phosphoribosyl-AMP cyclohydrolase</fullName>
        <shortName evidence="1">PRA-CH</shortName>
        <ecNumber evidence="1">3.5.4.19</ecNumber>
    </recommendedName>
</protein>
<dbReference type="EC" id="3.5.4.19" evidence="1"/>
<dbReference type="EMBL" id="BX248358">
    <property type="protein sequence ID" value="CAE50082.1"/>
    <property type="molecule type" value="Genomic_DNA"/>
</dbReference>
<dbReference type="RefSeq" id="WP_003852067.1">
    <property type="nucleotide sequence ID" value="NC_002935.2"/>
</dbReference>
<dbReference type="SMR" id="P60541"/>
<dbReference type="STRING" id="257309.DIP1557"/>
<dbReference type="GeneID" id="29421391"/>
<dbReference type="KEGG" id="cdi:DIP1557"/>
<dbReference type="HOGENOM" id="CLU_048577_5_1_11"/>
<dbReference type="UniPathway" id="UPA00031">
    <property type="reaction ID" value="UER00008"/>
</dbReference>
<dbReference type="Proteomes" id="UP000002198">
    <property type="component" value="Chromosome"/>
</dbReference>
<dbReference type="GO" id="GO:0005737">
    <property type="term" value="C:cytoplasm"/>
    <property type="evidence" value="ECO:0007669"/>
    <property type="project" value="UniProtKB-SubCell"/>
</dbReference>
<dbReference type="GO" id="GO:0000287">
    <property type="term" value="F:magnesium ion binding"/>
    <property type="evidence" value="ECO:0007669"/>
    <property type="project" value="UniProtKB-UniRule"/>
</dbReference>
<dbReference type="GO" id="GO:0004635">
    <property type="term" value="F:phosphoribosyl-AMP cyclohydrolase activity"/>
    <property type="evidence" value="ECO:0007669"/>
    <property type="project" value="UniProtKB-UniRule"/>
</dbReference>
<dbReference type="GO" id="GO:0008270">
    <property type="term" value="F:zinc ion binding"/>
    <property type="evidence" value="ECO:0007669"/>
    <property type="project" value="UniProtKB-UniRule"/>
</dbReference>
<dbReference type="GO" id="GO:0000105">
    <property type="term" value="P:L-histidine biosynthetic process"/>
    <property type="evidence" value="ECO:0007669"/>
    <property type="project" value="UniProtKB-UniRule"/>
</dbReference>
<dbReference type="FunFam" id="3.10.20.810:FF:000001">
    <property type="entry name" value="Histidine biosynthesis bifunctional protein HisIE"/>
    <property type="match status" value="1"/>
</dbReference>
<dbReference type="Gene3D" id="3.10.20.810">
    <property type="entry name" value="Phosphoribosyl-AMP cyclohydrolase"/>
    <property type="match status" value="1"/>
</dbReference>
<dbReference type="HAMAP" id="MF_01021">
    <property type="entry name" value="HisI"/>
    <property type="match status" value="1"/>
</dbReference>
<dbReference type="InterPro" id="IPR026660">
    <property type="entry name" value="PRA-CH"/>
</dbReference>
<dbReference type="InterPro" id="IPR002496">
    <property type="entry name" value="PRib_AMP_CycHydrolase_dom"/>
</dbReference>
<dbReference type="InterPro" id="IPR038019">
    <property type="entry name" value="PRib_AMP_CycHydrolase_sf"/>
</dbReference>
<dbReference type="NCBIfam" id="NF000768">
    <property type="entry name" value="PRK00051.1"/>
    <property type="match status" value="1"/>
</dbReference>
<dbReference type="PANTHER" id="PTHR42945">
    <property type="entry name" value="HISTIDINE BIOSYNTHESIS BIFUNCTIONAL PROTEIN"/>
    <property type="match status" value="1"/>
</dbReference>
<dbReference type="PANTHER" id="PTHR42945:SF11">
    <property type="entry name" value="PHOSPHORIBOSYL-AMP CYCLOHYDROLASE"/>
    <property type="match status" value="1"/>
</dbReference>
<dbReference type="Pfam" id="PF01502">
    <property type="entry name" value="PRA-CH"/>
    <property type="match status" value="1"/>
</dbReference>
<dbReference type="SUPFAM" id="SSF141734">
    <property type="entry name" value="HisI-like"/>
    <property type="match status" value="1"/>
</dbReference>
<keyword id="KW-0028">Amino-acid biosynthesis</keyword>
<keyword id="KW-0963">Cytoplasm</keyword>
<keyword id="KW-0368">Histidine biosynthesis</keyword>
<keyword id="KW-0378">Hydrolase</keyword>
<keyword id="KW-0460">Magnesium</keyword>
<keyword id="KW-0479">Metal-binding</keyword>
<keyword id="KW-1185">Reference proteome</keyword>
<keyword id="KW-0862">Zinc</keyword>
<feature type="chain" id="PRO_0000136473" description="Phosphoribosyl-AMP cyclohydrolase">
    <location>
        <begin position="1"/>
        <end position="116"/>
    </location>
</feature>
<feature type="binding site" evidence="1">
    <location>
        <position position="85"/>
    </location>
    <ligand>
        <name>Mg(2+)</name>
        <dbReference type="ChEBI" id="CHEBI:18420"/>
    </ligand>
</feature>
<feature type="binding site" evidence="1">
    <location>
        <position position="86"/>
    </location>
    <ligand>
        <name>Zn(2+)</name>
        <dbReference type="ChEBI" id="CHEBI:29105"/>
        <note>ligand shared between dimeric partners</note>
    </ligand>
</feature>
<feature type="binding site" evidence="1">
    <location>
        <position position="87"/>
    </location>
    <ligand>
        <name>Mg(2+)</name>
        <dbReference type="ChEBI" id="CHEBI:18420"/>
    </ligand>
</feature>
<feature type="binding site" evidence="1">
    <location>
        <position position="89"/>
    </location>
    <ligand>
        <name>Mg(2+)</name>
        <dbReference type="ChEBI" id="CHEBI:18420"/>
    </ligand>
</feature>
<feature type="binding site" evidence="1">
    <location>
        <position position="102"/>
    </location>
    <ligand>
        <name>Zn(2+)</name>
        <dbReference type="ChEBI" id="CHEBI:29105"/>
        <note>ligand shared between dimeric partners</note>
    </ligand>
</feature>
<feature type="binding site" evidence="1">
    <location>
        <position position="109"/>
    </location>
    <ligand>
        <name>Zn(2+)</name>
        <dbReference type="ChEBI" id="CHEBI:29105"/>
        <note>ligand shared between dimeric partners</note>
    </ligand>
</feature>
<comment type="function">
    <text evidence="1">Catalyzes the hydrolysis of the adenine ring of phosphoribosyl-AMP.</text>
</comment>
<comment type="catalytic activity">
    <reaction evidence="1">
        <text>1-(5-phospho-beta-D-ribosyl)-5'-AMP + H2O = 1-(5-phospho-beta-D-ribosyl)-5-[(5-phospho-beta-D-ribosylamino)methylideneamino]imidazole-4-carboxamide</text>
        <dbReference type="Rhea" id="RHEA:20049"/>
        <dbReference type="ChEBI" id="CHEBI:15377"/>
        <dbReference type="ChEBI" id="CHEBI:58435"/>
        <dbReference type="ChEBI" id="CHEBI:59457"/>
        <dbReference type="EC" id="3.5.4.19"/>
    </reaction>
</comment>
<comment type="cofactor">
    <cofactor evidence="1">
        <name>Mg(2+)</name>
        <dbReference type="ChEBI" id="CHEBI:18420"/>
    </cofactor>
    <text evidence="1">Binds 1 Mg(2+) ion per subunit.</text>
</comment>
<comment type="cofactor">
    <cofactor evidence="1">
        <name>Zn(2+)</name>
        <dbReference type="ChEBI" id="CHEBI:29105"/>
    </cofactor>
    <text evidence="1">Binds 1 zinc ion per subunit.</text>
</comment>
<comment type="pathway">
    <text evidence="1">Amino-acid biosynthesis; L-histidine biosynthesis; L-histidine from 5-phospho-alpha-D-ribose 1-diphosphate: step 3/9.</text>
</comment>
<comment type="subunit">
    <text evidence="1">Homodimer.</text>
</comment>
<comment type="subcellular location">
    <subcellularLocation>
        <location evidence="1">Cytoplasm</location>
    </subcellularLocation>
</comment>
<comment type="similarity">
    <text evidence="1">Belongs to the PRA-CH family.</text>
</comment>